<gene>
    <name evidence="39 43" type="primary">KAT2B</name>
    <name evidence="38" type="synonym">PCAF</name>
</gene>
<name>KAT2B_HUMAN</name>
<sequence length="832" mass="93013">MSEAGGAGPGGCGAGAGAGAGPGALPPQPAALPPAPPQGSPCAAAAGGSGACGPATAVAAAGTAEGPGGGGSARIAVKKAQLRSAPRAKKLEKLGVYSACKAEESCKCNGWKNPNPSPTPPRADLQQIIVSLTESCRSCSHALAAHVSHLENVSEEEMNRLLGIVLDVEYLFTCVHKEEDADTKQVYFYLFKLLRKSILQRGKPVVEGSLEKKPPFEKPSIEQGVNNFVQYKFSHLPAKERQTIVELAKMFLNRINYWHLEAPSQRRLRSPNDDISGYKENYTRWLCYCNVPQFCDSLPRYETTQVFGRTLLRSVFTVMRRQLLEQARQEKDKLPLEKRTLILTHFPKFLSMLEEEVYSQNSPIWDQDFLSASSRTSQLGIQTVINPPPVAGTISYNSTSSSLEQPNAGSSSPACKASSGLEANPGEKRKMTDSHVLEEAKKPRVMGDIPMELINEVMSTITDPAAMLGPETNFLSAHSARDEAARLEERRGVIEFHVVGNSLNQKPNKKILMWLVGLQNVFSHQLPRMPKEYITRLVFDPKHKTLALIKDGRVIGGICFRMFPSQGFTEIVFCAVTSNEQVKGYGTHLMNHLKEYHIKHDILNFLTYADEYAIGYFKKQGFSKEIKIPKTKYVGYIKDYEGATLMGCELNPRIPYTEFSVIIKKQKEIIKKLIERKQAQIRKVYPGLSCFKDGVRQIPIESIPGIRETGWKPSGKEKSKEPRDPDQLYSTLKSILQQVKSHQSAWPFMEPVKRTEAPGYYEVIRFPMDLKTMSERLKNRYYVSKKLFMADLQRVFTNCKEYNPPESEYYKCANILEKFFFSKIKEAGLIDK</sequence>
<keyword id="KW-0002">3D-structure</keyword>
<keyword id="KW-0010">Activator</keyword>
<keyword id="KW-0012">Acyltransferase</keyword>
<keyword id="KW-0090">Biological rhythms</keyword>
<keyword id="KW-0103">Bromodomain</keyword>
<keyword id="KW-0131">Cell cycle</keyword>
<keyword id="KW-0963">Cytoplasm</keyword>
<keyword id="KW-0206">Cytoskeleton</keyword>
<keyword id="KW-0225">Disease variant</keyword>
<keyword id="KW-0945">Host-virus interaction</keyword>
<keyword id="KW-0539">Nucleus</keyword>
<keyword id="KW-1267">Proteomics identification</keyword>
<keyword id="KW-1185">Reference proteome</keyword>
<keyword id="KW-0804">Transcription</keyword>
<keyword id="KW-0805">Transcription regulation</keyword>
<keyword id="KW-0808">Transferase</keyword>
<evidence type="ECO:0000250" key="1">
    <source>
        <dbReference type="UniProtKB" id="Q92830"/>
    </source>
</evidence>
<evidence type="ECO:0000250" key="2">
    <source>
        <dbReference type="UniProtKB" id="Q9JHD1"/>
    </source>
</evidence>
<evidence type="ECO:0000255" key="3">
    <source>
        <dbReference type="PROSITE-ProRule" id="PRU00035"/>
    </source>
</evidence>
<evidence type="ECO:0000255" key="4">
    <source>
        <dbReference type="PROSITE-ProRule" id="PRU00532"/>
    </source>
</evidence>
<evidence type="ECO:0000256" key="5">
    <source>
        <dbReference type="SAM" id="MobiDB-lite"/>
    </source>
</evidence>
<evidence type="ECO:0000269" key="6">
    <source>
    </source>
</evidence>
<evidence type="ECO:0000269" key="7">
    <source>
    </source>
</evidence>
<evidence type="ECO:0000269" key="8">
    <source>
    </source>
</evidence>
<evidence type="ECO:0000269" key="9">
    <source>
    </source>
</evidence>
<evidence type="ECO:0000269" key="10">
    <source>
    </source>
</evidence>
<evidence type="ECO:0000269" key="11">
    <source>
    </source>
</evidence>
<evidence type="ECO:0000269" key="12">
    <source>
    </source>
</evidence>
<evidence type="ECO:0000269" key="13">
    <source>
    </source>
</evidence>
<evidence type="ECO:0000269" key="14">
    <source>
    </source>
</evidence>
<evidence type="ECO:0000269" key="15">
    <source>
    </source>
</evidence>
<evidence type="ECO:0000269" key="16">
    <source>
    </source>
</evidence>
<evidence type="ECO:0000269" key="17">
    <source>
    </source>
</evidence>
<evidence type="ECO:0000269" key="18">
    <source>
    </source>
</evidence>
<evidence type="ECO:0000269" key="19">
    <source>
    </source>
</evidence>
<evidence type="ECO:0000269" key="20">
    <source>
    </source>
</evidence>
<evidence type="ECO:0000269" key="21">
    <source>
    </source>
</evidence>
<evidence type="ECO:0000269" key="22">
    <source>
    </source>
</evidence>
<evidence type="ECO:0000269" key="23">
    <source>
    </source>
</evidence>
<evidence type="ECO:0000269" key="24">
    <source>
    </source>
</evidence>
<evidence type="ECO:0000269" key="25">
    <source>
    </source>
</evidence>
<evidence type="ECO:0000269" key="26">
    <source>
    </source>
</evidence>
<evidence type="ECO:0000269" key="27">
    <source>
    </source>
</evidence>
<evidence type="ECO:0000269" key="28">
    <source>
    </source>
</evidence>
<evidence type="ECO:0000269" key="29">
    <source>
    </source>
</evidence>
<evidence type="ECO:0000269" key="30">
    <source>
    </source>
</evidence>
<evidence type="ECO:0000269" key="31">
    <source>
    </source>
</evidence>
<evidence type="ECO:0000269" key="32">
    <source>
    </source>
</evidence>
<evidence type="ECO:0000269" key="33">
    <source>
    </source>
</evidence>
<evidence type="ECO:0000269" key="34">
    <source>
    </source>
</evidence>
<evidence type="ECO:0000269" key="35">
    <source>
    </source>
</evidence>
<evidence type="ECO:0000269" key="36">
    <source>
    </source>
</evidence>
<evidence type="ECO:0000303" key="37">
    <source>
    </source>
</evidence>
<evidence type="ECO:0000303" key="38">
    <source>
    </source>
</evidence>
<evidence type="ECO:0000303" key="39">
    <source>
    </source>
</evidence>
<evidence type="ECO:0000305" key="40"/>
<evidence type="ECO:0000305" key="41">
    <source>
    </source>
</evidence>
<evidence type="ECO:0000312" key="42">
    <source>
        <dbReference type="EMBL" id="AAC50890.2"/>
    </source>
</evidence>
<evidence type="ECO:0000312" key="43">
    <source>
        <dbReference type="HGNC" id="HGNC:8638"/>
    </source>
</evidence>
<evidence type="ECO:0007829" key="44">
    <source>
        <dbReference type="PDB" id="1CM0"/>
    </source>
</evidence>
<evidence type="ECO:0007829" key="45">
    <source>
        <dbReference type="PDB" id="1JM4"/>
    </source>
</evidence>
<evidence type="ECO:0007829" key="46">
    <source>
        <dbReference type="PDB" id="1N72"/>
    </source>
</evidence>
<evidence type="ECO:0007829" key="47">
    <source>
        <dbReference type="PDB" id="1WUG"/>
    </source>
</evidence>
<evidence type="ECO:0007829" key="48">
    <source>
        <dbReference type="PDB" id="1WUM"/>
    </source>
</evidence>
<evidence type="ECO:0007829" key="49">
    <source>
        <dbReference type="PDB" id="1ZS5"/>
    </source>
</evidence>
<evidence type="ECO:0007829" key="50">
    <source>
        <dbReference type="PDB" id="5MKX"/>
    </source>
</evidence>
<feature type="chain" id="PRO_0000211208" description="Histone acetyltransferase KAT2B">
    <location>
        <begin position="1"/>
        <end position="832"/>
    </location>
</feature>
<feature type="domain" description="N-acetyltransferase" evidence="1 4">
    <location>
        <begin position="503"/>
        <end position="651"/>
    </location>
</feature>
<feature type="domain" description="Bromo" evidence="3">
    <location>
        <begin position="723"/>
        <end position="827"/>
    </location>
</feature>
<feature type="region of interest" description="Disordered" evidence="5">
    <location>
        <begin position="1"/>
        <end position="54"/>
    </location>
</feature>
<feature type="region of interest" description="Disordered" evidence="5">
    <location>
        <begin position="395"/>
        <end position="436"/>
    </location>
</feature>
<feature type="region of interest" description="Disordered" evidence="5">
    <location>
        <begin position="706"/>
        <end position="725"/>
    </location>
</feature>
<feature type="compositionally biased region" description="Gly residues" evidence="5">
    <location>
        <begin position="1"/>
        <end position="22"/>
    </location>
</feature>
<feature type="compositionally biased region" description="Pro residues" evidence="5">
    <location>
        <begin position="24"/>
        <end position="39"/>
    </location>
</feature>
<feature type="compositionally biased region" description="Low complexity" evidence="5">
    <location>
        <begin position="40"/>
        <end position="54"/>
    </location>
</feature>
<feature type="compositionally biased region" description="Polar residues" evidence="5">
    <location>
        <begin position="395"/>
        <end position="413"/>
    </location>
</feature>
<feature type="compositionally biased region" description="Basic and acidic residues" evidence="5">
    <location>
        <begin position="425"/>
        <end position="436"/>
    </location>
</feature>
<feature type="compositionally biased region" description="Basic and acidic residues" evidence="5">
    <location>
        <begin position="714"/>
        <end position="725"/>
    </location>
</feature>
<feature type="active site" description="Proton donor/acceptor" evidence="37">
    <location>
        <position position="570"/>
    </location>
</feature>
<feature type="binding site" evidence="7">
    <location>
        <begin position="574"/>
        <end position="576"/>
    </location>
    <ligand>
        <name>acetyl-CoA</name>
        <dbReference type="ChEBI" id="CHEBI:57288"/>
    </ligand>
</feature>
<feature type="binding site" evidence="7">
    <location>
        <begin position="581"/>
        <end position="587"/>
    </location>
    <ligand>
        <name>acetyl-CoA</name>
        <dbReference type="ChEBI" id="CHEBI:57288"/>
    </ligand>
</feature>
<feature type="binding site" evidence="7">
    <location>
        <begin position="612"/>
        <end position="615"/>
    </location>
    <ligand>
        <name>acetyl-CoA</name>
        <dbReference type="ChEBI" id="CHEBI:57288"/>
    </ligand>
</feature>
<feature type="sequence variant" id="VAR_079852" description="Found in a patient with isolated coloboma; uncertain significance." evidence="29">
    <original>V</original>
    <variation>G</variation>
    <location>
        <position position="130"/>
    </location>
</feature>
<feature type="sequence variant" id="VAR_034372" description="In dbSNP:rs17006625.">
    <original>N</original>
    <variation>S</variation>
    <location>
        <position position="386"/>
    </location>
</feature>
<feature type="mutagenesis site" description="Reduced acetyl-lysine binding." evidence="6">
    <original>V</original>
    <variation>A</variation>
    <location>
        <position position="752"/>
    </location>
</feature>
<feature type="mutagenesis site" description="Reduced acetyl-lysine binding." evidence="6">
    <original>Y</original>
    <variation>A</variation>
    <location>
        <position position="760"/>
    </location>
</feature>
<feature type="mutagenesis site" description="Reduced acetyl-lysine binding." evidence="6">
    <original>Y</original>
    <variation>A</variation>
    <location>
        <position position="802"/>
    </location>
</feature>
<feature type="mutagenesis site" description="Complete loss of acetyl-lysine binding." evidence="6">
    <original>Y</original>
    <variation>A</variation>
    <location>
        <position position="809"/>
    </location>
</feature>
<feature type="sequence conflict" description="In Ref. 1; AAC50890." evidence="40" ref="1">
    <original>PP</original>
    <variation>AA</variation>
    <location>
        <begin position="804"/>
        <end position="805"/>
    </location>
</feature>
<feature type="strand" evidence="44">
    <location>
        <begin position="494"/>
        <end position="499"/>
    </location>
</feature>
<feature type="strand" evidence="44">
    <location>
        <begin position="503"/>
        <end position="505"/>
    </location>
</feature>
<feature type="helix" evidence="44">
    <location>
        <begin position="509"/>
        <end position="525"/>
    </location>
</feature>
<feature type="helix" evidence="44">
    <location>
        <begin position="531"/>
        <end position="538"/>
    </location>
</feature>
<feature type="strand" evidence="44">
    <location>
        <begin position="543"/>
        <end position="550"/>
    </location>
</feature>
<feature type="strand" evidence="44">
    <location>
        <begin position="553"/>
        <end position="563"/>
    </location>
</feature>
<feature type="turn" evidence="44">
    <location>
        <begin position="564"/>
        <end position="567"/>
    </location>
</feature>
<feature type="strand" evidence="44">
    <location>
        <begin position="568"/>
        <end position="576"/>
    </location>
</feature>
<feature type="helix" evidence="44">
    <location>
        <begin position="578"/>
        <end position="580"/>
    </location>
</feature>
<feature type="strand" evidence="44">
    <location>
        <begin position="582"/>
        <end position="584"/>
    </location>
</feature>
<feature type="helix" evidence="44">
    <location>
        <begin position="585"/>
        <end position="599"/>
    </location>
</feature>
<feature type="strand" evidence="44">
    <location>
        <begin position="604"/>
        <end position="609"/>
    </location>
</feature>
<feature type="turn" evidence="44">
    <location>
        <begin position="611"/>
        <end position="613"/>
    </location>
</feature>
<feature type="helix" evidence="44">
    <location>
        <begin position="614"/>
        <end position="618"/>
    </location>
</feature>
<feature type="turn" evidence="44">
    <location>
        <begin position="619"/>
        <end position="621"/>
    </location>
</feature>
<feature type="strand" evidence="44">
    <location>
        <begin position="623"/>
        <end position="625"/>
    </location>
</feature>
<feature type="helix" evidence="44">
    <location>
        <begin position="630"/>
        <end position="633"/>
    </location>
</feature>
<feature type="strand" evidence="44">
    <location>
        <begin position="644"/>
        <end position="649"/>
    </location>
</feature>
<feature type="helix" evidence="50">
    <location>
        <begin position="727"/>
        <end position="741"/>
    </location>
</feature>
<feature type="strand" evidence="48">
    <location>
        <begin position="742"/>
        <end position="744"/>
    </location>
</feature>
<feature type="helix" evidence="50">
    <location>
        <begin position="746"/>
        <end position="748"/>
    </location>
</feature>
<feature type="turn" evidence="50">
    <location>
        <begin position="754"/>
        <end position="756"/>
    </location>
</feature>
<feature type="strand" evidence="49">
    <location>
        <begin position="757"/>
        <end position="759"/>
    </location>
</feature>
<feature type="helix" evidence="50">
    <location>
        <begin position="760"/>
        <end position="763"/>
    </location>
</feature>
<feature type="strand" evidence="45">
    <location>
        <begin position="764"/>
        <end position="766"/>
    </location>
</feature>
<feature type="helix" evidence="50">
    <location>
        <begin position="770"/>
        <end position="778"/>
    </location>
</feature>
<feature type="helix" evidence="50">
    <location>
        <begin position="785"/>
        <end position="802"/>
    </location>
</feature>
<feature type="strand" evidence="47">
    <location>
        <begin position="805"/>
        <end position="807"/>
    </location>
</feature>
<feature type="helix" evidence="50">
    <location>
        <begin position="808"/>
        <end position="827"/>
    </location>
</feature>
<feature type="strand" evidence="46">
    <location>
        <begin position="828"/>
        <end position="830"/>
    </location>
</feature>
<organism evidence="42">
    <name type="scientific">Homo sapiens</name>
    <name type="common">Human</name>
    <dbReference type="NCBI Taxonomy" id="9606"/>
    <lineage>
        <taxon>Eukaryota</taxon>
        <taxon>Metazoa</taxon>
        <taxon>Chordata</taxon>
        <taxon>Craniata</taxon>
        <taxon>Vertebrata</taxon>
        <taxon>Euteleostomi</taxon>
        <taxon>Mammalia</taxon>
        <taxon>Eutheria</taxon>
        <taxon>Euarchontoglires</taxon>
        <taxon>Primates</taxon>
        <taxon>Haplorrhini</taxon>
        <taxon>Catarrhini</taxon>
        <taxon>Hominidae</taxon>
        <taxon>Homo</taxon>
    </lineage>
</organism>
<accession>Q92831</accession>
<accession>Q6NSK1</accession>
<reference evidence="40" key="1">
    <citation type="journal article" date="1996" name="Nature">
        <title>A p300/CBP-associated factor that competes with the adenoviral oncoprotein E1A.</title>
        <authorList>
            <person name="Yang X.-J."/>
            <person name="Ogryzko V.V."/>
            <person name="Nishikawa J."/>
            <person name="Howard B.H."/>
            <person name="Nakatani Y."/>
        </authorList>
    </citation>
    <scope>NUCLEOTIDE SEQUENCE [MRNA]</scope>
    <scope>FUNCTION</scope>
    <scope>SUBUNIT</scope>
    <scope>TISSUE SPECIFICITY</scope>
    <scope>INTERACTION WITH EP300 AND CREBBP</scope>
    <source>
        <tissue>Liver</tissue>
    </source>
</reference>
<reference evidence="40" key="2">
    <citation type="submission" date="1999-07" db="EMBL/GenBank/DDBJ databases">
        <authorList>
            <person name="Nakatani Y."/>
        </authorList>
    </citation>
    <scope>SEQUENCE REVISION</scope>
    <source>
        <tissue>Liver</tissue>
    </source>
</reference>
<reference key="3">
    <citation type="journal article" date="2004" name="Genome Res.">
        <title>The status, quality, and expansion of the NIH full-length cDNA project: the Mammalian Gene Collection (MGC).</title>
        <authorList>
            <consortium name="The MGC Project Team"/>
        </authorList>
    </citation>
    <scope>NUCLEOTIDE SEQUENCE [LARGE SCALE MRNA]</scope>
</reference>
<reference key="4">
    <citation type="journal article" date="1996" name="Cell">
        <title>The transcriptional coactivators p300 and CBP are histone acetyltransferases.</title>
        <authorList>
            <person name="Ogryzko V.V."/>
            <person name="Schiltz R.L."/>
            <person name="Russanova V."/>
            <person name="Howard B.H."/>
            <person name="Nakatani Y."/>
        </authorList>
    </citation>
    <scope>FUNCTION</scope>
    <scope>CATALYTIC ACTIVITY</scope>
</reference>
<reference key="5">
    <citation type="journal article" date="1997" name="J. Biol. Chem.">
        <title>TRAM-1, a novel 160-kDa thyroid hormone receptor activator molecule, exhibits distinct properties from steroid receptor coactivator-1.</title>
        <authorList>
            <person name="Takeshita A."/>
            <person name="Cardona G.R."/>
            <person name="Koibuchi N."/>
            <person name="Suen C.-S."/>
            <person name="Chin W.W."/>
        </authorList>
    </citation>
    <scope>INTERACTION WITH NCOA3</scope>
</reference>
<reference key="6">
    <citation type="journal article" date="1997" name="Nature">
        <title>Steroid receptor coactivator-1 is a histone acetyltransferase.</title>
        <authorList>
            <person name="Spencer T.E."/>
            <person name="Jenster G."/>
            <person name="Burcin M.M."/>
            <person name="Allis C.D."/>
            <person name="Zhou J."/>
            <person name="Mizzen C.A."/>
            <person name="McKenna N.J."/>
            <person name="Onate S.A."/>
            <person name="Tsai S.Y."/>
            <person name="Tsai M.-J."/>
            <person name="O'Malley B.W."/>
        </authorList>
    </citation>
    <scope>INTERACTION WITH NCOA1</scope>
</reference>
<reference key="7">
    <citation type="journal article" date="1998" name="Proc. Natl. Acad. Sci. U.S.A.">
        <title>Acetylation and modulation of erythroid Krueppel-like factor (EKLF) activity by interaction with histone acetyltransferases.</title>
        <authorList>
            <person name="Zhang W."/>
            <person name="Bieker J.J."/>
        </authorList>
    </citation>
    <scope>INTERACTION WITH KLF1</scope>
    <scope>FUNCTION</scope>
</reference>
<reference key="8">
    <citation type="journal article" date="2000" name="EMBO J.">
        <title>Regulation of E2F1 activity by acetylation.</title>
        <authorList>
            <person name="Martinez-Balbas M.A."/>
            <person name="Bauer U.M."/>
            <person name="Nielsen S.J."/>
            <person name="Brehm A."/>
            <person name="Kouzarides T."/>
        </authorList>
    </citation>
    <scope>INTERACTION WITH E2F1</scope>
    <scope>FUNCTION</scope>
</reference>
<reference key="9">
    <citation type="journal article" date="2000" name="J. Biol. Chem.">
        <title>p300 and p300/cAMP-responsive element-binding protein associated factor interact with human T-cell lymphotropic virus type-1 Tax in a multi-histone acetyltransferase/activator-enhancer complex.</title>
        <authorList>
            <person name="Harrod R."/>
            <person name="Kuo Y.-L."/>
            <person name="Tang Y."/>
            <person name="Yao Y."/>
            <person name="Vassilev A."/>
            <person name="Nakatani Y."/>
            <person name="Giam C.-Z."/>
        </authorList>
    </citation>
    <scope>INTERACTION WITH HTLV-1 TAX (MICROBIAL INFECTION)</scope>
</reference>
<reference key="10">
    <citation type="journal article" date="2001" name="J. Biol. Chem.">
        <title>Interaction of EVI1 with cAMP-responsive element-binding protein-binding protein (CBP) and p300/CBP-associated factor (P/CAF) results in reversible acetylation of EVI1 and in co-localization in nuclear speckles.</title>
        <authorList>
            <person name="Chakraborty S."/>
            <person name="Senyuk V."/>
            <person name="Sitailo S."/>
            <person name="Chi Y."/>
            <person name="Nucifora G."/>
        </authorList>
    </citation>
    <scope>INTERACTION WITH MECOM</scope>
</reference>
<reference key="11">
    <citation type="journal article" date="2002" name="EMBO J.">
        <title>Differential acetylation of Tat coordinates its interaction with the co-activators cyclin T1 and PCAF.</title>
        <authorList>
            <person name="Bres V."/>
            <person name="Tagami H."/>
            <person name="Peloponese J.-M."/>
            <person name="Loret E."/>
            <person name="Jeang K.-T."/>
            <person name="Nakatani Y."/>
            <person name="Emiliani S."/>
            <person name="Benkirane M."/>
            <person name="Kiernan R.E."/>
        </authorList>
    </citation>
    <scope>INTERACTION WITH HIV-1 TAT (MICROBIAL INFECTION)</scope>
</reference>
<reference key="12">
    <citation type="journal article" date="2004" name="J. Biol. Chem.">
        <title>Histone acetyltransferase-dependent chromatin remodeling and the vascular clock.</title>
        <authorList>
            <person name="Curtis A.M."/>
            <person name="Seo S.B."/>
            <person name="Westgate E.J."/>
            <person name="Rudic R.D."/>
            <person name="Smyth E.M."/>
            <person name="Chakravarti D."/>
            <person name="FitzGerald G.A."/>
            <person name="McNamara P."/>
        </authorList>
    </citation>
    <scope>FUNCTION</scope>
    <scope>INTERACTION WITH NPAS2; BMAL1 AND CLOCK</scope>
</reference>
<reference key="13">
    <citation type="journal article" date="2004" name="J. Biol. Chem.">
        <title>Site-specific acetylation of the fetal globin activator NF-E4 prevents its ubiquitination and regulates its interaction with the histone deacetylase, HDAC1.</title>
        <authorList>
            <person name="Zhao Q."/>
            <person name="Cumming H."/>
            <person name="Cerruti L."/>
            <person name="Cunningham J.M."/>
            <person name="Jane S.M."/>
        </authorList>
    </citation>
    <scope>INTERACTION WITH NFE4</scope>
</reference>
<reference key="14">
    <citation type="journal article" date="2004" name="Oncogene">
        <title>The transforming acidic coiled coil proteins interact with nuclear histone acetyltransferases.</title>
        <authorList>
            <person name="Gangisetty O."/>
            <person name="Lauffart B."/>
            <person name="Sondarva G.V."/>
            <person name="Chelsea D.M."/>
            <person name="Still I.H."/>
        </authorList>
    </citation>
    <scope>INTERACTION WITH TACC1; TACC2 AND TACC3</scope>
</reference>
<reference key="15">
    <citation type="journal article" date="2006" name="Mol. Cell. Proteomics">
        <title>Modulation of testicular receptor 4 activity by mitogen-activated protein kinase-mediated phosphorylation.</title>
        <authorList>
            <person name="Huq M.D."/>
            <person name="Gupta P."/>
            <person name="Tsai N.P."/>
            <person name="Wei L.N."/>
        </authorList>
    </citation>
    <scope>INTERACTION WITH NR2C2</scope>
</reference>
<reference key="16">
    <citation type="journal article" date="2007" name="J. Cell. Biochem.">
        <title>Concerted activation of the Mdm2 promoter by p72 RNA helicase and the coactivators p300 and P/CAF.</title>
        <authorList>
            <person name="Shin S."/>
            <person name="Janknecht R."/>
        </authorList>
    </citation>
    <scope>INTERACTION WITH DDX17</scope>
</reference>
<reference key="17">
    <citation type="journal article" date="2007" name="Proc. Natl. Acad. Sci. U.S.A.">
        <title>Glucocorticoid-stimulated preadipocyte differentiation is mediated through acetylation of C/EBPbeta by GCN5.</title>
        <authorList>
            <person name="Wiper-Bergeron N."/>
            <person name="Salem H.A."/>
            <person name="Tomlinson J.J."/>
            <person name="Wu D."/>
            <person name="Hache R.J."/>
        </authorList>
    </citation>
    <scope>INTERACTION WITH CEBPB</scope>
</reference>
<reference key="18">
    <citation type="journal article" date="2007" name="Mol. Cell">
        <title>A histone H2A deubiquitinase complex coordinating histone acetylation and H1 dissociation in transcriptional regulation.</title>
        <authorList>
            <person name="Zhu P."/>
            <person name="Zhou W."/>
            <person name="Wang J."/>
            <person name="Puc J."/>
            <person name="Ohgi K.A."/>
            <person name="Erdjument-Bromage H."/>
            <person name="Tempst P."/>
            <person name="Glass C.K."/>
            <person name="Rosenfeld M.G."/>
        </authorList>
    </citation>
    <scope>IDENTIFICATION IN A LARGE CHROMATIN REMODELING COMPLEX</scope>
</reference>
<reference key="19">
    <citation type="journal article" date="2007" name="Mol. Endocrinol.">
        <title>Estrogen induces expression of BCAS3, a novel estrogen receptor-alpha coactivator, through proline-, glutamic acid-, and leucine-rich protein-1 (PELP1).</title>
        <authorList>
            <person name="Gururaj A.E."/>
            <person name="Peng S."/>
            <person name="Vadlamudi R.K."/>
            <person name="Kumar R."/>
        </authorList>
    </citation>
    <scope>INTERACTION WITH BCAS3</scope>
</reference>
<reference key="20">
    <citation type="journal article" date="2010" name="J. Cell Sci.">
        <title>Acetylation of Rb by PCAF is required for nuclear localization and keratinocyte differentiation.</title>
        <authorList>
            <person name="Pickard A."/>
            <person name="Wong P.P."/>
            <person name="McCance D.J."/>
        </authorList>
    </citation>
    <scope>SUBCELLULAR LOCATION</scope>
    <scope>DEVELOPMENTAL STAGE</scope>
    <scope>TISSUE SPECIFICITY</scope>
</reference>
<reference key="21">
    <citation type="journal article" date="2011" name="EMBO J.">
        <title>Distinct roles of GCN5/PCAF-mediated H3K9ac and CBP/p300-mediated H3K18/27ac in nuclear receptor transactivation.</title>
        <authorList>
            <person name="Jin Q."/>
            <person name="Yu L.R."/>
            <person name="Wang L."/>
            <person name="Zhang Z."/>
            <person name="Kasper L.H."/>
            <person name="Lee J.E."/>
            <person name="Wang C."/>
            <person name="Brindle P.K."/>
            <person name="Dent S.Y."/>
            <person name="Ge K."/>
        </authorList>
    </citation>
    <scope>FUNCTION</scope>
    <scope>CATALYTIC ACTIVITY</scope>
</reference>
<reference key="22">
    <citation type="journal article" date="2012" name="Proc. Natl. Acad. Sci. U.S.A.">
        <title>EB1 acetylation by P300/CBP-associated factor (PCAF) ensures accurate kinetochore-microtubule interactions in mitosis.</title>
        <authorList>
            <person name="Xia P."/>
            <person name="Wang Z."/>
            <person name="Liu X."/>
            <person name="Wu B."/>
            <person name="Wang J."/>
            <person name="Ward T."/>
            <person name="Zhang L."/>
            <person name="Ding X."/>
            <person name="Gibbons G."/>
            <person name="Shi Y."/>
            <person name="Yao X."/>
        </authorList>
    </citation>
    <scope>FUNCTION</scope>
    <scope>CATALYTIC ACTIVITY</scope>
</reference>
<reference key="23">
    <citation type="journal article" date="2013" name="Mol. Cell">
        <title>Acetylation stabilizes ATP-citrate lyase to promote lipid biosynthesis and tumor growth.</title>
        <authorList>
            <person name="Lin R."/>
            <person name="Tao R."/>
            <person name="Gao X."/>
            <person name="Li T."/>
            <person name="Zhou X."/>
            <person name="Guan K.L."/>
            <person name="Xiong Y."/>
            <person name="Lei Q.Y."/>
        </authorList>
    </citation>
    <scope>FUNCTION</scope>
</reference>
<reference key="24">
    <citation type="journal article" date="2015" name="Genes Dev.">
        <title>Screen identifies bromodomain protein ZMYND8 in chromatin recognition of transcription-associated DNA damage that promotes homologous recombination.</title>
        <authorList>
            <person name="Gong F."/>
            <person name="Chiu L.Y."/>
            <person name="Cox B."/>
            <person name="Aymard F."/>
            <person name="Clouaire T."/>
            <person name="Leung J.W."/>
            <person name="Cammarata M."/>
            <person name="Perez M."/>
            <person name="Agarwal P."/>
            <person name="Brodbelt J.S."/>
            <person name="Legube G."/>
            <person name="Miller K.M."/>
        </authorList>
    </citation>
    <scope>SUBCELLULAR LOCATION</scope>
</reference>
<reference key="25">
    <citation type="journal article" date="2016" name="J. Enzym. Inhib. Med. Chem.">
        <title>P/CAF-mediated spermidine acetylation regulates histone acetyltransferase activity.</title>
        <authorList>
            <person name="Burgio G."/>
            <person name="Corona D.F."/>
            <person name="Nicotra C.M."/>
            <person name="Carruba G."/>
            <person name="Taibi G."/>
        </authorList>
    </citation>
    <scope>FUNCTION</scope>
    <scope>CATALYTIC ACTIVITY</scope>
    <scope>ACTIVITY REGULATION</scope>
    <scope>BIOPHYSICOCHEMICAL PROPERTIES</scope>
</reference>
<reference key="26">
    <citation type="journal article" date="2016" name="Nat. Commun.">
        <title>KAT2A/KAT2B-targeted acetylome reveals a role for PLK4 acetylation in preventing centrosome amplification.</title>
        <authorList>
            <person name="Fournier M."/>
            <person name="Orpinell M."/>
            <person name="Grauffel C."/>
            <person name="Scheer E."/>
            <person name="Garnier J.M."/>
            <person name="Ye T."/>
            <person name="Chavant V."/>
            <person name="Joint M."/>
            <person name="Esashi F."/>
            <person name="Dejaegere A."/>
            <person name="Goenczy P."/>
            <person name="Tora L."/>
        </authorList>
    </citation>
    <scope>FUNCTION</scope>
    <scope>SUBCELLULAR LOCATION</scope>
    <scope>INTERACTION WITH PLK4</scope>
</reference>
<reference key="27">
    <citation type="journal article" date="2016" name="Nat. Commun.">
        <title>SIRT7-dependent deacetylation of the U3-55k protein controls pre-rRNA processing.</title>
        <authorList>
            <person name="Chen S."/>
            <person name="Blank M.F."/>
            <person name="Iyer A."/>
            <person name="Huang B."/>
            <person name="Wang L."/>
            <person name="Grummt I."/>
            <person name="Voit R."/>
        </authorList>
    </citation>
    <scope>FUNCTION</scope>
</reference>
<reference key="28">
    <citation type="journal article" date="2017" name="J. Mol. Cell. Cardiol.">
        <title>Acetylation of TBX5 by KAT2B and KAT2A regulates heart and limb development.</title>
        <authorList>
            <person name="Ghosh T.K."/>
            <person name="Aparicio-Sanchez J.J."/>
            <person name="Buxton S."/>
            <person name="Ketley A."/>
            <person name="Mohamed T."/>
            <person name="Rutland C.S."/>
            <person name="Loughna S."/>
            <person name="Brook J.D."/>
        </authorList>
    </citation>
    <scope>FUNCTION</scope>
    <scope>INTERACTION WITH TBX5</scope>
</reference>
<reference key="29">
    <citation type="journal article" date="2023" name="Epigenetics Chromatin">
        <title>The pattern of histone H3 epigenetic posttranslational modifications is regulated by the VRK1 chromatin kinase.</title>
        <authorList>
            <person name="Monte-Serrano E."/>
            <person name="Morejon-Garcia P."/>
            <person name="Campillo-Marcos I."/>
            <person name="Campos-Diaz A."/>
            <person name="Navarro-Carrasco E."/>
            <person name="Lazo P.A."/>
        </authorList>
    </citation>
    <scope>INTERACTION WITH VRK1</scope>
</reference>
<reference key="30">
    <citation type="journal article" date="1999" name="EMBO J.">
        <title>Crystal structure of the histone acetyltransferase domain of the human PCAF transcriptional regulator bound to coenzyme A.</title>
        <authorList>
            <person name="Clements A."/>
            <person name="Rojas J.R."/>
            <person name="Trievel R.C."/>
            <person name="Wang L."/>
            <person name="Berger S.L."/>
            <person name="Marmorstein R."/>
        </authorList>
    </citation>
    <scope>X-RAY CRYSTALLOGRAPHY (2.30 ANGSTROMS) OF 493-658 IN COMPLEX WITH COENZYME A</scope>
    <scope>ACTIVE SITE</scope>
</reference>
<reference key="31">
    <citation type="journal article" date="1999" name="Nature">
        <title>Structure and ligand of a histone acetyltransferase bromodomain.</title>
        <authorList>
            <person name="Dhalluin C."/>
            <person name="Carlson J.E."/>
            <person name="Zeng L."/>
            <person name="He C."/>
            <person name="Aggarwal A.K."/>
            <person name="Zhou M.-M."/>
        </authorList>
    </citation>
    <scope>STRUCTURE BY NMR OF 715-832</scope>
    <scope>MUTAGENESIS OF VAL-752; TYR-760; TYR-802 AND TYR-809</scope>
    <source>
        <tissue>Liver</tissue>
    </source>
</reference>
<reference key="32">
    <citation type="journal article" date="2002" name="Mol. Cell">
        <title>Structural basis of lysine-acetylated HIV-1 Tat recognition by PCAF bromodomain.</title>
        <authorList>
            <person name="Mujtaba S."/>
            <person name="He Y."/>
            <person name="Zeng L."/>
            <person name="Farooq A."/>
            <person name="Carlson J.E."/>
            <person name="Ott M."/>
            <person name="Verdin E."/>
            <person name="Zhou M.-M."/>
        </authorList>
    </citation>
    <scope>STRUCTURE BY NMR OF 719-832 IN COMPLEX WITH HIV-1 TAT</scope>
</reference>
<reference key="33">
    <citation type="journal article" date="2012" name="Cell">
        <title>Histone recognition and large-scale structural analysis of the human bromodomain family.</title>
        <authorList>
            <person name="Filippakopoulos P."/>
            <person name="Picaud S."/>
            <person name="Mangos M."/>
            <person name="Keates T."/>
            <person name="Lambert J.P."/>
            <person name="Barsyte-Lovejoy D."/>
            <person name="Felletar I."/>
            <person name="Volkmer R."/>
            <person name="Muller S."/>
            <person name="Pawson T."/>
            <person name="Gingras A.C."/>
            <person name="Arrowsmith C.H."/>
            <person name="Knapp S."/>
        </authorList>
    </citation>
    <scope>X-RAY CRYSTALLOGRAPHY (2.25 ANGSTROMS) OF 715-831</scope>
</reference>
<reference key="34">
    <citation type="journal article" date="2017" name="Hum. Mutat.">
        <title>A recurrent de novo mutation in ACTG1 causes isolated ocular coloboma.</title>
        <authorList>
            <consortium name="UK10K"/>
            <person name="Rainger J."/>
            <person name="Williamson K.A."/>
            <person name="Soares D.C."/>
            <person name="Truch J."/>
            <person name="Kurian D."/>
            <person name="Gillessen-Kaesbach G."/>
            <person name="Seawright A."/>
            <person name="Prendergast J."/>
            <person name="Halachev M."/>
            <person name="Wheeler A."/>
            <person name="McTeir L."/>
            <person name="Gill A.C."/>
            <person name="van Heyningen V."/>
            <person name="Davey M.G."/>
            <person name="FitzPatrick D.R."/>
        </authorList>
    </citation>
    <scope>VARIANT GLY-130</scope>
</reference>
<comment type="function">
    <text evidence="8 13 22 23 24 26 27 28 30 32 33 36">Functions as a histone acetyltransferase (HAT) to promote transcriptional activation (PubMed:8945521). Has significant histone acetyltransferase activity with core histones (H3 and H4), and also with nucleosome core particles (PubMed:8945521). Has a a strong preference for acetylation of H3 at 'Lys-9' (H3K9ac) (PubMed:21131905). Also acetylates non-histone proteins, such as ACLY, MAPRE1/EB1, PLK4, RRP9/U3-55K and TBX5 (PubMed:10675335, PubMed:23001180, PubMed:23932781, PubMed:26867678, PubMed:27796307, PubMed:29174768, PubMed:9707565). Inhibits cell-cycle progression and counteracts the mitogenic activity of the adenoviral oncoprotein E1A (PubMed:8684459). Acts as a circadian transcriptional coactivator which enhances the activity of the circadian transcriptional activators: NPAS2-BMAL1 and CLOCK-BMAL1 heterodimers (PubMed:14645221). Involved in heart and limb development by mediating acetylation of TBX5, acetylation regulating nucleocytoplasmic shuttling of TBX5 (PubMed:29174768). Acts as a negative regulator of centrosome amplification by mediating acetylation of PLK4 (PubMed:27796307). Acetylates RRP9/U3-55K, a core subunit of the U3 snoRNP complex, impairing pre-rRNA processing (PubMed:26867678). Acetylates MAPRE1/EB1, promoting dynamic kinetochore-microtubule interactions in early mitosis (PubMed:23001180). Also acetylates spermidine (PubMed:27389534).</text>
</comment>
<comment type="function">
    <text evidence="12">(Microbial infection) In case of HIV-1 infection, it is recruited by the viral protein Tat. Regulates Tat's transactivating activity and may help inducing chromatin remodeling of proviral genes.</text>
</comment>
<comment type="catalytic activity">
    <reaction evidence="22 33">
        <text>L-lysyl-[histone] + acetyl-CoA = N(6)-acetyl-L-lysyl-[histone] + CoA + H(+)</text>
        <dbReference type="Rhea" id="RHEA:21992"/>
        <dbReference type="Rhea" id="RHEA-COMP:9845"/>
        <dbReference type="Rhea" id="RHEA-COMP:11338"/>
        <dbReference type="ChEBI" id="CHEBI:15378"/>
        <dbReference type="ChEBI" id="CHEBI:29969"/>
        <dbReference type="ChEBI" id="CHEBI:57287"/>
        <dbReference type="ChEBI" id="CHEBI:57288"/>
        <dbReference type="ChEBI" id="CHEBI:61930"/>
        <dbReference type="EC" id="2.3.1.48"/>
    </reaction>
    <physiologicalReaction direction="left-to-right" evidence="22">
        <dbReference type="Rhea" id="RHEA:21993"/>
    </physiologicalReaction>
</comment>
<comment type="catalytic activity">
    <reaction evidence="23 27">
        <text>L-lysyl-[protein] + acetyl-CoA = N(6)-acetyl-L-lysyl-[protein] + CoA + H(+)</text>
        <dbReference type="Rhea" id="RHEA:45948"/>
        <dbReference type="Rhea" id="RHEA-COMP:9752"/>
        <dbReference type="Rhea" id="RHEA-COMP:10731"/>
        <dbReference type="ChEBI" id="CHEBI:15378"/>
        <dbReference type="ChEBI" id="CHEBI:29969"/>
        <dbReference type="ChEBI" id="CHEBI:57287"/>
        <dbReference type="ChEBI" id="CHEBI:57288"/>
        <dbReference type="ChEBI" id="CHEBI:61930"/>
    </reaction>
    <physiologicalReaction direction="left-to-right" evidence="23 41">
        <dbReference type="Rhea" id="RHEA:45949"/>
    </physiologicalReaction>
</comment>
<comment type="catalytic activity">
    <reaction evidence="27">
        <text>spermidine + acetyl-CoA = N(8)-acetylspermidine + CoA + H(+)</text>
        <dbReference type="Rhea" id="RHEA:28270"/>
        <dbReference type="ChEBI" id="CHEBI:15378"/>
        <dbReference type="ChEBI" id="CHEBI:57287"/>
        <dbReference type="ChEBI" id="CHEBI:57288"/>
        <dbReference type="ChEBI" id="CHEBI:57834"/>
        <dbReference type="ChEBI" id="CHEBI:58535"/>
        <dbReference type="EC" id="2.3.1.57"/>
    </reaction>
    <physiologicalReaction direction="left-to-right" evidence="41">
        <dbReference type="Rhea" id="RHEA:28271"/>
    </physiologicalReaction>
</comment>
<comment type="activity regulation">
    <text evidence="27">Activated in vitro by very low concentrations of spermidine, but inhibited at spermidine concentrations higher than 4 uM. The activating effect of low spermidine concentrations may be mediated by N(8)-acetylspermidine produced by KAT2B/P/CAF itself acting as a positive feedback loop.</text>
</comment>
<comment type="biophysicochemical properties">
    <kinetics>
        <KM evidence="27">1.74 uM for acetyl-CoA</KM>
        <KM evidence="27">2.29 uM for spermidine</KM>
    </kinetics>
</comment>
<comment type="subunit">
    <text evidence="2 8 10 11 13 14 15 16 17 18 19 20 28 30 31 32 34 35 36">Interacts with SIRT1. Interacts (unsumoylated form) with NR2C1; the interaction promotes transactivation activity (By similarity). Interacts with EP300, CREBBP and DDX17. Interacts with NCOA1 and NCOA3. Component of a large chromatin remodeling complex, at least composed of MYSM1, KAT2B/PCAF, RBM10 and KIF11/TRIP5. Interacts with NR2C2 (hypophosphorylated and unsumoylated form); the interaction promotes the transactivation activity of NR2C2. Interacts with KLF1; the interaction does not acetylate KLF1 and there is no enhancement of its transactivational activity. Interacts with NFE4. Interacts with MECOM. Interacts with E2F1; the interaction acetylates E2F1 augmenting its DNA-binding and transcriptional activity. Interacts with NPAS2, BMAL1 and CLOCK. Interacts with BCAS3. Interacts with CEBPB (PubMed:17301242). Interacts with NR4A3 (By similarity). Interacts with NFATC2 (By similarity). Interacts with TBX5 (PubMed:29174768). Interacts with PLK4 (PubMed:27796307). Interacts with RB1; this interaction leads to RB1 acetylation (By similarity). Interacts with VRK1 (PubMed:37179361).</text>
</comment>
<comment type="subunit">
    <text evidence="12">(Microbial infection) Interacts with and acetylates HIV-1 Tat.</text>
</comment>
<comment type="subunit">
    <text evidence="9">(Microbial infection) Interacts with HTLV-1 Tax.</text>
</comment>
<comment type="interaction">
    <interactant intactId="EBI-477430">
        <id>Q92831</id>
    </interactant>
    <interactant intactId="EBI-1001438">
        <id>O60566</id>
        <label>BUB1B</label>
    </interactant>
    <organismsDiffer>false</organismsDiffer>
    <experiments>14</experiments>
</comment>
<comment type="interaction">
    <interactant intactId="EBI-477430">
        <id>Q92831</id>
    </interactant>
    <interactant intactId="EBI-81215">
        <id>Q92793</id>
        <label>CREBBP</label>
    </interactant>
    <organismsDiffer>false</organismsDiffer>
    <experiments>4</experiments>
</comment>
<comment type="interaction">
    <interactant intactId="EBI-477430">
        <id>Q92831</id>
    </interactant>
    <interactant intactId="EBI-744366">
        <id>Q96KQ7</id>
        <label>EHMT2</label>
    </interactant>
    <organismsDiffer>false</organismsDiffer>
    <experiments>3</experiments>
</comment>
<comment type="interaction">
    <interactant intactId="EBI-477430">
        <id>Q92831</id>
    </interactant>
    <interactant intactId="EBI-447295">
        <id>Q09472</id>
        <label>EP300</label>
    </interactant>
    <organismsDiffer>false</organismsDiffer>
    <experiments>2</experiments>
</comment>
<comment type="interaction">
    <interactant intactId="EBI-477430">
        <id>Q92831</id>
    </interactant>
    <interactant intactId="EBI-447269">
        <id>Q16665</id>
        <label>HIF1A</label>
    </interactant>
    <organismsDiffer>false</organismsDiffer>
    <experiments>2</experiments>
</comment>
<comment type="interaction">
    <interactant intactId="EBI-477430">
        <id>Q92831</id>
    </interactant>
    <interactant intactId="EBI-9846663">
        <id>Q9Y5W3</id>
        <label>KLF2</label>
    </interactant>
    <organismsDiffer>false</organismsDiffer>
    <experiments>2</experiments>
</comment>
<comment type="interaction">
    <interactant intactId="EBI-477430">
        <id>Q92831</id>
    </interactant>
    <interactant intactId="EBI-1802965">
        <id>Q96EB6</id>
        <label>SIRT1</label>
    </interactant>
    <organismsDiffer>false</organismsDiffer>
    <experiments>3</experiments>
</comment>
<comment type="interaction">
    <interactant intactId="EBI-477430">
        <id>Q92831</id>
    </interactant>
    <interactant intactId="EBI-477232">
        <id>Q8IXJ6</id>
        <label>SIRT2</label>
    </interactant>
    <organismsDiffer>false</organismsDiffer>
    <experiments>4</experiments>
</comment>
<comment type="interaction">
    <interactant intactId="EBI-477430">
        <id>Q92831</id>
    </interactant>
    <interactant intactId="EBI-5235340">
        <id>Q7Z699</id>
        <label>SPRED1</label>
    </interactant>
    <organismsDiffer>false</organismsDiffer>
    <experiments>3</experiments>
</comment>
<comment type="interaction">
    <interactant intactId="EBI-477430">
        <id>Q92831</id>
    </interactant>
    <interactant intactId="EBI-712521">
        <id>Q16594</id>
        <label>TAF9</label>
    </interactant>
    <organismsDiffer>false</organismsDiffer>
    <experiments>3</experiments>
</comment>
<comment type="interaction">
    <interactant intactId="EBI-477430">
        <id>Q92831</id>
    </interactant>
    <interactant intactId="EBI-1797287">
        <id>Q15672</id>
        <label>TWIST1</label>
    </interactant>
    <organismsDiffer>false</organismsDiffer>
    <experiments>2</experiments>
</comment>
<comment type="interaction">
    <interactant intactId="EBI-477430">
        <id>Q92831</id>
    </interactant>
    <interactant intactId="EBI-1054489">
        <id>P22415</id>
        <label>USF1</label>
    </interactant>
    <organismsDiffer>false</organismsDiffer>
    <experiments>5</experiments>
</comment>
<comment type="interaction">
    <interactant intactId="EBI-477430">
        <id>Q92831</id>
    </interactant>
    <interactant intactId="EBI-1029979">
        <id>P28033</id>
        <label>Cebpb</label>
    </interactant>
    <organismsDiffer>true</organismsDiffer>
    <experiments>2</experiments>
</comment>
<comment type="interaction">
    <interactant intactId="EBI-477430">
        <id>Q92831</id>
    </interactant>
    <interactant intactId="EBI-866453">
        <id>P03129</id>
        <label>E7</label>
    </interactant>
    <organismsDiffer>true</organismsDiffer>
    <experiments>3</experiments>
</comment>
<comment type="interaction">
    <interactant intactId="EBI-477430">
        <id>Q92831</id>
    </interactant>
    <interactant intactId="EBI-522090">
        <id>P02299</id>
        <label>His3:CG33854</label>
    </interactant>
    <organismsDiffer>true</organismsDiffer>
    <experiments>2</experiments>
</comment>
<comment type="interaction">
    <interactant intactId="EBI-477430">
        <id>Q92831</id>
    </interactant>
    <interactant intactId="EBI-185028">
        <id>P84040</id>
        <label>His4:CG33909</label>
    </interactant>
    <organismsDiffer>true</organismsDiffer>
    <experiments>2</experiments>
</comment>
<comment type="interaction">
    <interactant intactId="EBI-477430">
        <id>Q92831</id>
    </interactant>
    <interactant intactId="EBI-25475856">
        <id>P0DTC9</id>
        <label>N</label>
    </interactant>
    <organismsDiffer>true</organismsDiffer>
    <experiments>2</experiments>
</comment>
<comment type="interaction">
    <interactant intactId="EBI-477430">
        <id>Q92831</id>
    </interactant>
    <interactant intactId="EBI-7602718">
        <id>P59595</id>
        <label>N</label>
    </interactant>
    <organismsDiffer>true</organismsDiffer>
    <experiments>2</experiments>
</comment>
<comment type="interaction">
    <interactant intactId="EBI-477430">
        <id>Q92831</id>
    </interactant>
    <interactant intactId="EBI-2338228">
        <id>O88898-2</id>
        <label>Tp63</label>
    </interactant>
    <organismsDiffer>true</organismsDiffer>
    <experiments>3</experiments>
</comment>
<comment type="interaction">
    <interactant intactId="EBI-477430">
        <id>Q92831</id>
    </interactant>
    <interactant intactId="EBI-2603114">
        <id>P03255</id>
    </interactant>
    <organismsDiffer>true</organismsDiffer>
    <experiments>3</experiments>
</comment>
<comment type="interaction">
    <interactant intactId="EBI-477430">
        <id>Q92831</id>
    </interactant>
    <interactant intactId="EBI-6859460">
        <id>P03255-2</id>
    </interactant>
    <organismsDiffer>true</organismsDiffer>
    <experiments>3</experiments>
</comment>
<comment type="subcellular location">
    <subcellularLocation>
        <location evidence="21 25 30">Nucleus</location>
    </subcellularLocation>
    <subcellularLocation>
        <location evidence="30">Cytoplasm</location>
        <location evidence="30">Cytoskeleton</location>
        <location evidence="30">Microtubule organizing center</location>
        <location evidence="30">Centrosome</location>
    </subcellularLocation>
    <subcellularLocation>
        <location evidence="21">Cytoplasm</location>
    </subcellularLocation>
    <text evidence="21 25 30">Mainly localizes to the nucleus. Also localizes to centrosomes in late G1 and around the G1/S transition, coinciding with the onset of centriole formation. Subcellular location may vary depending upon cell differentiation state. Cytoplasmic at the very stages of keratinocyte differentiation, becomes nuclear at later differentiation stages. Cytoplasmic in basal epithelial cells (undifferentiated cells) and nuclear in parabasal cells (differentiated cells) (PubMed:20940255). Localizes to sites of DNA damage (PubMed:25593309).</text>
</comment>
<comment type="tissue specificity">
    <text evidence="21 32">Ubiquitously expressed but most abundant in heart and skeletal muscle. Also expressed in the skin, in keratinocytes (at protein level) (PubMed:20940255).</text>
</comment>
<comment type="developmental stage">
    <text evidence="21">Up-regulated during keratinocyte differentiation (at protein level).</text>
</comment>
<comment type="domain">
    <text evidence="11">(Microbial infection) The bromodomain mediates binding to HIV-1 Tat.</text>
</comment>
<comment type="disease">
    <text evidence="29">Defects in KAT2B has been found in a patient with isolated coloboma, a defect of the eye characterized by the absence of ocular structures due to abnormal morphogenesis of the optic cup and stalk, and the fusion of the fetal fissure (optic fissure). Isolated colobomas may be associated with an abnormally small eye (microphthalmia) or small cornea.</text>
</comment>
<comment type="similarity">
    <text evidence="40">Belongs to the acetyltransferase family. GCN5 subfamily.</text>
</comment>
<proteinExistence type="evidence at protein level"/>
<protein>
    <recommendedName>
        <fullName>Histone acetyltransferase KAT2B</fullName>
        <ecNumber evidence="22 33">2.3.1.48</ecNumber>
    </recommendedName>
    <alternativeName>
        <fullName evidence="38">Histone acetyltransferase PCAF</fullName>
        <shortName evidence="38">Histone acetylase PCAF</shortName>
    </alternativeName>
    <alternativeName>
        <fullName evidence="39">Lysine acetyltransferase 2B</fullName>
    </alternativeName>
    <alternativeName>
        <fullName evidence="38">P300/CBP-associated factor</fullName>
        <shortName evidence="38">P/CAF</shortName>
    </alternativeName>
    <alternativeName>
        <fullName>Spermidine acetyltransferase KAT2B</fullName>
        <ecNumber evidence="27">2.3.1.57</ecNumber>
    </alternativeName>
</protein>
<dbReference type="EC" id="2.3.1.48" evidence="22 33"/>
<dbReference type="EC" id="2.3.1.57" evidence="27"/>
<dbReference type="EMBL" id="U57317">
    <property type="protein sequence ID" value="AAC50890.2"/>
    <property type="molecule type" value="mRNA"/>
</dbReference>
<dbReference type="EMBL" id="BC060823">
    <property type="protein sequence ID" value="AAH60823.1"/>
    <property type="molecule type" value="mRNA"/>
</dbReference>
<dbReference type="EMBL" id="BC070075">
    <property type="protein sequence ID" value="AAH70075.1"/>
    <property type="molecule type" value="mRNA"/>
</dbReference>
<dbReference type="CCDS" id="CCDS2634.1"/>
<dbReference type="PIR" id="S71788">
    <property type="entry name" value="S71788"/>
</dbReference>
<dbReference type="RefSeq" id="NP_003875.3">
    <property type="nucleotide sequence ID" value="NM_003884.4"/>
</dbReference>
<dbReference type="PDB" id="1CM0">
    <property type="method" value="X-ray"/>
    <property type="resolution" value="2.30 A"/>
    <property type="chains" value="A/B=493-658"/>
</dbReference>
<dbReference type="PDB" id="1JM4">
    <property type="method" value="NMR"/>
    <property type="chains" value="B=719-832"/>
</dbReference>
<dbReference type="PDB" id="1N72">
    <property type="method" value="NMR"/>
    <property type="chains" value="A=719-832"/>
</dbReference>
<dbReference type="PDB" id="1WUG">
    <property type="method" value="NMR"/>
    <property type="chains" value="A=719-832"/>
</dbReference>
<dbReference type="PDB" id="1WUM">
    <property type="method" value="NMR"/>
    <property type="chains" value="A=719-832"/>
</dbReference>
<dbReference type="PDB" id="1ZS5">
    <property type="method" value="NMR"/>
    <property type="chains" value="A=719-832"/>
</dbReference>
<dbReference type="PDB" id="2RNW">
    <property type="method" value="NMR"/>
    <property type="chains" value="A=719-832"/>
</dbReference>
<dbReference type="PDB" id="2RNX">
    <property type="method" value="NMR"/>
    <property type="chains" value="A=719-832"/>
</dbReference>
<dbReference type="PDB" id="3GG3">
    <property type="method" value="X-ray"/>
    <property type="resolution" value="2.25 A"/>
    <property type="chains" value="A/B=715-831"/>
</dbReference>
<dbReference type="PDB" id="4NSQ">
    <property type="method" value="X-ray"/>
    <property type="resolution" value="2.31 A"/>
    <property type="chains" value="A/B/C/D=493-658"/>
</dbReference>
<dbReference type="PDB" id="5FDZ">
    <property type="method" value="X-ray"/>
    <property type="resolution" value="2.40 A"/>
    <property type="chains" value="A/B=715-831"/>
</dbReference>
<dbReference type="PDB" id="5FE0">
    <property type="method" value="X-ray"/>
    <property type="resolution" value="2.30 A"/>
    <property type="chains" value="A/B=715-831"/>
</dbReference>
<dbReference type="PDB" id="5FE1">
    <property type="method" value="X-ray"/>
    <property type="resolution" value="2.22 A"/>
    <property type="chains" value="A/B=715-831"/>
</dbReference>
<dbReference type="PDB" id="5FE2">
    <property type="method" value="X-ray"/>
    <property type="resolution" value="2.25 A"/>
    <property type="chains" value="A/B=715-831"/>
</dbReference>
<dbReference type="PDB" id="5FE3">
    <property type="method" value="X-ray"/>
    <property type="resolution" value="2.12 A"/>
    <property type="chains" value="A/B=715-831"/>
</dbReference>
<dbReference type="PDB" id="5FE4">
    <property type="method" value="X-ray"/>
    <property type="resolution" value="2.15 A"/>
    <property type="chains" value="A/B=715-831"/>
</dbReference>
<dbReference type="PDB" id="5FE5">
    <property type="method" value="X-ray"/>
    <property type="resolution" value="2.12 A"/>
    <property type="chains" value="A/B=715-831"/>
</dbReference>
<dbReference type="PDB" id="5FE6">
    <property type="method" value="X-ray"/>
    <property type="resolution" value="1.77 A"/>
    <property type="chains" value="A/B=715-831"/>
</dbReference>
<dbReference type="PDB" id="5FE7">
    <property type="method" value="X-ray"/>
    <property type="resolution" value="2.08 A"/>
    <property type="chains" value="A/B=715-831"/>
</dbReference>
<dbReference type="PDB" id="5FE8">
    <property type="method" value="X-ray"/>
    <property type="resolution" value="2.10 A"/>
    <property type="chains" value="A/B=715-831"/>
</dbReference>
<dbReference type="PDB" id="5FE9">
    <property type="method" value="X-ray"/>
    <property type="resolution" value="2.35 A"/>
    <property type="chains" value="A/B=715-831"/>
</dbReference>
<dbReference type="PDB" id="5LVQ">
    <property type="method" value="X-ray"/>
    <property type="resolution" value="2.05 A"/>
    <property type="chains" value="A/B=715-831"/>
</dbReference>
<dbReference type="PDB" id="5LVR">
    <property type="method" value="X-ray"/>
    <property type="resolution" value="2.05 A"/>
    <property type="chains" value="A/B=715-831"/>
</dbReference>
<dbReference type="PDB" id="5MKX">
    <property type="method" value="X-ray"/>
    <property type="resolution" value="1.68 A"/>
    <property type="chains" value="A/B=715-831"/>
</dbReference>
<dbReference type="PDB" id="6J3O">
    <property type="method" value="X-ray"/>
    <property type="resolution" value="2.11 A"/>
    <property type="chains" value="A/B=715-831"/>
</dbReference>
<dbReference type="PDBsum" id="1CM0"/>
<dbReference type="PDBsum" id="1JM4"/>
<dbReference type="PDBsum" id="1N72"/>
<dbReference type="PDBsum" id="1WUG"/>
<dbReference type="PDBsum" id="1WUM"/>
<dbReference type="PDBsum" id="1ZS5"/>
<dbReference type="PDBsum" id="2RNW"/>
<dbReference type="PDBsum" id="2RNX"/>
<dbReference type="PDBsum" id="3GG3"/>
<dbReference type="PDBsum" id="4NSQ"/>
<dbReference type="PDBsum" id="5FDZ"/>
<dbReference type="PDBsum" id="5FE0"/>
<dbReference type="PDBsum" id="5FE1"/>
<dbReference type="PDBsum" id="5FE2"/>
<dbReference type="PDBsum" id="5FE3"/>
<dbReference type="PDBsum" id="5FE4"/>
<dbReference type="PDBsum" id="5FE5"/>
<dbReference type="PDBsum" id="5FE6"/>
<dbReference type="PDBsum" id="5FE7"/>
<dbReference type="PDBsum" id="5FE8"/>
<dbReference type="PDBsum" id="5FE9"/>
<dbReference type="PDBsum" id="5LVQ"/>
<dbReference type="PDBsum" id="5LVR"/>
<dbReference type="PDBsum" id="5MKX"/>
<dbReference type="PDBsum" id="6J3O"/>
<dbReference type="BMRB" id="Q92831"/>
<dbReference type="SMR" id="Q92831"/>
<dbReference type="BioGRID" id="114375">
    <property type="interactions" value="252"/>
</dbReference>
<dbReference type="ComplexPortal" id="CPX-1004">
    <property type="entry name" value="PCAF-containing ATAC complex"/>
</dbReference>
<dbReference type="ComplexPortal" id="CPX-6802">
    <property type="entry name" value="SAGA complex, KAT2B variant"/>
</dbReference>
<dbReference type="ComplexPortal" id="CPX-989">
    <property type="entry name" value="PCAF histone acetylase complex"/>
</dbReference>
<dbReference type="CORUM" id="Q92831"/>
<dbReference type="DIP" id="DIP-29778N"/>
<dbReference type="FunCoup" id="Q92831">
    <property type="interactions" value="1644"/>
</dbReference>
<dbReference type="IntAct" id="Q92831">
    <property type="interactions" value="71"/>
</dbReference>
<dbReference type="MINT" id="Q92831"/>
<dbReference type="STRING" id="9606.ENSP00000263754"/>
<dbReference type="BindingDB" id="Q92831"/>
<dbReference type="ChEMBL" id="CHEMBL5500"/>
<dbReference type="DrugBank" id="DB08186">
    <property type="generic name" value="(3E)-4-(1-METHYL-1H-INDOL-3-YL)BUT-3-EN-2-ONE"/>
</dbReference>
<dbReference type="DrugBank" id="DB01992">
    <property type="generic name" value="Coenzyme A"/>
</dbReference>
<dbReference type="DrugBank" id="DB08291">
    <property type="generic name" value="N-(3-AMINOPROPYL)-2-NITROBENZENAMINE"/>
</dbReference>
<dbReference type="GuidetoPHARMACOLOGY" id="2737"/>
<dbReference type="CarbonylDB" id="Q92831"/>
<dbReference type="GlyGen" id="Q92831">
    <property type="glycosylation" value="1 site"/>
</dbReference>
<dbReference type="iPTMnet" id="Q92831"/>
<dbReference type="PhosphoSitePlus" id="Q92831"/>
<dbReference type="BioMuta" id="KAT2B"/>
<dbReference type="DMDM" id="83287776"/>
<dbReference type="REPRODUCTION-2DPAGE" id="Q92831"/>
<dbReference type="jPOST" id="Q92831"/>
<dbReference type="MassIVE" id="Q92831"/>
<dbReference type="PaxDb" id="9606-ENSP00000263754"/>
<dbReference type="PeptideAtlas" id="Q92831"/>
<dbReference type="ProteomicsDB" id="75508"/>
<dbReference type="Antibodypedia" id="3865">
    <property type="antibodies" value="468 antibodies from 39 providers"/>
</dbReference>
<dbReference type="DNASU" id="8850"/>
<dbReference type="Ensembl" id="ENST00000263754.5">
    <property type="protein sequence ID" value="ENSP00000263754.4"/>
    <property type="gene ID" value="ENSG00000114166.8"/>
</dbReference>
<dbReference type="GeneID" id="8850"/>
<dbReference type="KEGG" id="hsa:8850"/>
<dbReference type="MANE-Select" id="ENST00000263754.5">
    <property type="protein sequence ID" value="ENSP00000263754.4"/>
    <property type="RefSeq nucleotide sequence ID" value="NM_003884.5"/>
    <property type="RefSeq protein sequence ID" value="NP_003875.3"/>
</dbReference>
<dbReference type="UCSC" id="uc003cbq.4">
    <property type="organism name" value="human"/>
</dbReference>
<dbReference type="AGR" id="HGNC:8638"/>
<dbReference type="CTD" id="8850"/>
<dbReference type="DisGeNET" id="8850"/>
<dbReference type="GeneCards" id="KAT2B"/>
<dbReference type="HGNC" id="HGNC:8638">
    <property type="gene designation" value="KAT2B"/>
</dbReference>
<dbReference type="HPA" id="ENSG00000114166">
    <property type="expression patterns" value="Low tissue specificity"/>
</dbReference>
<dbReference type="MalaCards" id="KAT2B"/>
<dbReference type="MIM" id="602303">
    <property type="type" value="gene"/>
</dbReference>
<dbReference type="neXtProt" id="NX_Q92831"/>
<dbReference type="OpenTargets" id="ENSG00000114166"/>
<dbReference type="PharmGKB" id="PA162392705"/>
<dbReference type="VEuPathDB" id="HostDB:ENSG00000114166"/>
<dbReference type="eggNOG" id="KOG1472">
    <property type="taxonomic scope" value="Eukaryota"/>
</dbReference>
<dbReference type="GeneTree" id="ENSGT00940000154995"/>
<dbReference type="HOGENOM" id="CLU_015901_0_0_1"/>
<dbReference type="InParanoid" id="Q92831"/>
<dbReference type="OMA" id="YFQTKMR"/>
<dbReference type="OrthoDB" id="1937912at2759"/>
<dbReference type="PAN-GO" id="Q92831">
    <property type="GO annotations" value="5 GO annotations based on evolutionary models"/>
</dbReference>
<dbReference type="PhylomeDB" id="Q92831"/>
<dbReference type="TreeFam" id="TF105399"/>
<dbReference type="BRENDA" id="2.3.1.48">
    <property type="organism ID" value="2681"/>
</dbReference>
<dbReference type="PathwayCommons" id="Q92831"/>
<dbReference type="Reactome" id="R-HSA-1912408">
    <property type="pathway name" value="Pre-NOTCH Transcription and Translation"/>
</dbReference>
<dbReference type="Reactome" id="R-HSA-2032785">
    <property type="pathway name" value="YAP1- and WWTR1 (TAZ)-stimulated gene expression"/>
</dbReference>
<dbReference type="Reactome" id="R-HSA-210744">
    <property type="pathway name" value="Regulation of gene expression in late stage (branching morphogenesis) pancreatic bud precursor cells"/>
</dbReference>
<dbReference type="Reactome" id="R-HSA-2122947">
    <property type="pathway name" value="NOTCH1 Intracellular Domain Regulates Transcription"/>
</dbReference>
<dbReference type="Reactome" id="R-HSA-2644606">
    <property type="pathway name" value="Constitutive Signaling by NOTCH1 PEST Domain Mutants"/>
</dbReference>
<dbReference type="Reactome" id="R-HSA-2894862">
    <property type="pathway name" value="Constitutive Signaling by NOTCH1 HD+PEST Domain Mutants"/>
</dbReference>
<dbReference type="Reactome" id="R-HSA-3214847">
    <property type="pathway name" value="HATs acetylate histones"/>
</dbReference>
<dbReference type="Reactome" id="R-HSA-350054">
    <property type="pathway name" value="Notch-HLH transcription pathway"/>
</dbReference>
<dbReference type="Reactome" id="R-HSA-5250924">
    <property type="pathway name" value="B-WICH complex positively regulates rRNA expression"/>
</dbReference>
<dbReference type="Reactome" id="R-HSA-5578768">
    <property type="pathway name" value="Physiological factors"/>
</dbReference>
<dbReference type="Reactome" id="R-HSA-5689901">
    <property type="pathway name" value="Metalloprotease DUBs"/>
</dbReference>
<dbReference type="Reactome" id="R-HSA-73762">
    <property type="pathway name" value="RNA Polymerase I Transcription Initiation"/>
</dbReference>
<dbReference type="Reactome" id="R-HSA-8936459">
    <property type="pathway name" value="RUNX1 regulates genes involved in megakaryocyte differentiation and platelet function"/>
</dbReference>
<dbReference type="Reactome" id="R-HSA-8941856">
    <property type="pathway name" value="RUNX3 regulates NOTCH signaling"/>
</dbReference>
<dbReference type="Reactome" id="R-HSA-9013508">
    <property type="pathway name" value="NOTCH3 Intracellular Domain Regulates Transcription"/>
</dbReference>
<dbReference type="Reactome" id="R-HSA-9013695">
    <property type="pathway name" value="NOTCH4 Intracellular Domain Regulates Transcription"/>
</dbReference>
<dbReference type="Reactome" id="R-HSA-9018519">
    <property type="pathway name" value="Estrogen-dependent gene expression"/>
</dbReference>
<dbReference type="Reactome" id="R-HSA-9617629">
    <property type="pathway name" value="Regulation of FOXO transcriptional activity by acetylation"/>
</dbReference>
<dbReference type="Reactome" id="R-HSA-9772755">
    <property type="pathway name" value="Formation of WDR5-containing histone-modifying complexes"/>
</dbReference>
<dbReference type="Reactome" id="R-HSA-9793380">
    <property type="pathway name" value="Formation of paraxial mesoderm"/>
</dbReference>
<dbReference type="SignaLink" id="Q92831"/>
<dbReference type="SIGNOR" id="Q92831"/>
<dbReference type="BioGRID-ORCS" id="8850">
    <property type="hits" value="13 hits in 1186 CRISPR screens"/>
</dbReference>
<dbReference type="ChiTaRS" id="KAT2B">
    <property type="organism name" value="human"/>
</dbReference>
<dbReference type="EvolutionaryTrace" id="Q92831"/>
<dbReference type="GeneWiki" id="PCAF"/>
<dbReference type="GenomeRNAi" id="8850"/>
<dbReference type="Pharos" id="Q92831">
    <property type="development level" value="Tchem"/>
</dbReference>
<dbReference type="PRO" id="PR:Q92831"/>
<dbReference type="Proteomes" id="UP000005640">
    <property type="component" value="Chromosome 3"/>
</dbReference>
<dbReference type="RNAct" id="Q92831">
    <property type="molecule type" value="protein"/>
</dbReference>
<dbReference type="Bgee" id="ENSG00000114166">
    <property type="expression patterns" value="Expressed in lateral globus pallidus and 207 other cell types or tissues"/>
</dbReference>
<dbReference type="GO" id="GO:0031672">
    <property type="term" value="C:A band"/>
    <property type="evidence" value="ECO:0007669"/>
    <property type="project" value="Ensembl"/>
</dbReference>
<dbReference type="GO" id="GO:0042641">
    <property type="term" value="C:actomyosin"/>
    <property type="evidence" value="ECO:0007669"/>
    <property type="project" value="Ensembl"/>
</dbReference>
<dbReference type="GO" id="GO:0140672">
    <property type="term" value="C:ATAC complex"/>
    <property type="evidence" value="ECO:0000314"/>
    <property type="project" value="BHF-UCL"/>
</dbReference>
<dbReference type="GO" id="GO:0005813">
    <property type="term" value="C:centrosome"/>
    <property type="evidence" value="ECO:0000314"/>
    <property type="project" value="UniProtKB"/>
</dbReference>
<dbReference type="GO" id="GO:0005737">
    <property type="term" value="C:cytoplasm"/>
    <property type="evidence" value="ECO:0000314"/>
    <property type="project" value="UniProt"/>
</dbReference>
<dbReference type="GO" id="GO:0005829">
    <property type="term" value="C:cytosol"/>
    <property type="evidence" value="ECO:0000314"/>
    <property type="project" value="HPA"/>
</dbReference>
<dbReference type="GO" id="GO:0031674">
    <property type="term" value="C:I band"/>
    <property type="evidence" value="ECO:0007669"/>
    <property type="project" value="Ensembl"/>
</dbReference>
<dbReference type="GO" id="GO:0000776">
    <property type="term" value="C:kinetochore"/>
    <property type="evidence" value="ECO:0007669"/>
    <property type="project" value="Ensembl"/>
</dbReference>
<dbReference type="GO" id="GO:0072686">
    <property type="term" value="C:mitotic spindle"/>
    <property type="evidence" value="ECO:0000303"/>
    <property type="project" value="ComplexPortal"/>
</dbReference>
<dbReference type="GO" id="GO:0005654">
    <property type="term" value="C:nucleoplasm"/>
    <property type="evidence" value="ECO:0000314"/>
    <property type="project" value="HPA"/>
</dbReference>
<dbReference type="GO" id="GO:0005634">
    <property type="term" value="C:nucleus"/>
    <property type="evidence" value="ECO:0000314"/>
    <property type="project" value="UniProtKB"/>
</dbReference>
<dbReference type="GO" id="GO:0032991">
    <property type="term" value="C:protein-containing complex"/>
    <property type="evidence" value="ECO:0000314"/>
    <property type="project" value="UniProtKB"/>
</dbReference>
<dbReference type="GO" id="GO:0000124">
    <property type="term" value="C:SAGA complex"/>
    <property type="evidence" value="ECO:0000303"/>
    <property type="project" value="UniProtKB"/>
</dbReference>
<dbReference type="GO" id="GO:0016407">
    <property type="term" value="F:acetyltransferase activity"/>
    <property type="evidence" value="ECO:0000314"/>
    <property type="project" value="UniProtKB"/>
</dbReference>
<dbReference type="GO" id="GO:0003682">
    <property type="term" value="F:chromatin binding"/>
    <property type="evidence" value="ECO:0000250"/>
    <property type="project" value="UniProtKB"/>
</dbReference>
<dbReference type="GO" id="GO:0004861">
    <property type="term" value="F:cyclin-dependent protein serine/threonine kinase inhibitor activity"/>
    <property type="evidence" value="ECO:0000250"/>
    <property type="project" value="UniProtKB"/>
</dbReference>
<dbReference type="GO" id="GO:0004145">
    <property type="term" value="F:diamine N-acetyltransferase activity"/>
    <property type="evidence" value="ECO:0007669"/>
    <property type="project" value="UniProtKB-EC"/>
</dbReference>
<dbReference type="GO" id="GO:0140297">
    <property type="term" value="F:DNA-binding transcription factor binding"/>
    <property type="evidence" value="ECO:0000353"/>
    <property type="project" value="UniProtKB"/>
</dbReference>
<dbReference type="GO" id="GO:0008047">
    <property type="term" value="F:enzyme activator activity"/>
    <property type="evidence" value="ECO:0000314"/>
    <property type="project" value="BHF-UCL"/>
</dbReference>
<dbReference type="GO" id="GO:0004402">
    <property type="term" value="F:histone acetyltransferase activity"/>
    <property type="evidence" value="ECO:0000314"/>
    <property type="project" value="UniProtKB"/>
</dbReference>
<dbReference type="GO" id="GO:0035035">
    <property type="term" value="F:histone acetyltransferase binding"/>
    <property type="evidence" value="ECO:0007669"/>
    <property type="project" value="Ensembl"/>
</dbReference>
<dbReference type="GO" id="GO:0042826">
    <property type="term" value="F:histone deacetylase binding"/>
    <property type="evidence" value="ECO:0000353"/>
    <property type="project" value="UniProtKB"/>
</dbReference>
<dbReference type="GO" id="GO:0010484">
    <property type="term" value="F:histone H3 acetyltransferase activity"/>
    <property type="evidence" value="ECO:0000318"/>
    <property type="project" value="GO_Central"/>
</dbReference>
<dbReference type="GO" id="GO:0043992">
    <property type="term" value="F:histone H3K9 acetyltransferase activity"/>
    <property type="evidence" value="ECO:0000314"/>
    <property type="project" value="UniProtKB"/>
</dbReference>
<dbReference type="GO" id="GO:0004468">
    <property type="term" value="F:L-lysine N-acetyltransferase activity, acting on acetyl phosphate as donor"/>
    <property type="evidence" value="ECO:0000314"/>
    <property type="project" value="UniProtKB"/>
</dbReference>
<dbReference type="GO" id="GO:0019901">
    <property type="term" value="F:protein kinase binding"/>
    <property type="evidence" value="ECO:0000250"/>
    <property type="project" value="UniProtKB"/>
</dbReference>
<dbReference type="GO" id="GO:0061733">
    <property type="term" value="F:protein-lysine-acetyltransferase activity"/>
    <property type="evidence" value="ECO:0000314"/>
    <property type="project" value="UniProtKB"/>
</dbReference>
<dbReference type="GO" id="GO:0000977">
    <property type="term" value="F:RNA polymerase II transcription regulatory region sequence-specific DNA binding"/>
    <property type="evidence" value="ECO:0007669"/>
    <property type="project" value="Ensembl"/>
</dbReference>
<dbReference type="GO" id="GO:0003713">
    <property type="term" value="F:transcription coactivator activity"/>
    <property type="evidence" value="ECO:0000314"/>
    <property type="project" value="UniProtKB"/>
</dbReference>
<dbReference type="GO" id="GO:0003712">
    <property type="term" value="F:transcription coregulator activity"/>
    <property type="evidence" value="ECO:0000353"/>
    <property type="project" value="UniProtKB"/>
</dbReference>
<dbReference type="GO" id="GO:0032869">
    <property type="term" value="P:cellular response to insulin stimulus"/>
    <property type="evidence" value="ECO:0000314"/>
    <property type="project" value="BHF-UCL"/>
</dbReference>
<dbReference type="GO" id="GO:0034599">
    <property type="term" value="P:cellular response to oxidative stress"/>
    <property type="evidence" value="ECO:0007669"/>
    <property type="project" value="Ensembl"/>
</dbReference>
<dbReference type="GO" id="GO:0071374">
    <property type="term" value="P:cellular response to parathyroid hormone stimulus"/>
    <property type="evidence" value="ECO:0007669"/>
    <property type="project" value="Ensembl"/>
</dbReference>
<dbReference type="GO" id="GO:0006338">
    <property type="term" value="P:chromatin remodeling"/>
    <property type="evidence" value="ECO:0000314"/>
    <property type="project" value="UniProtKB"/>
</dbReference>
<dbReference type="GO" id="GO:0006094">
    <property type="term" value="P:gluconeogenesis"/>
    <property type="evidence" value="ECO:0007669"/>
    <property type="project" value="Ensembl"/>
</dbReference>
<dbReference type="GO" id="GO:0007507">
    <property type="term" value="P:heart development"/>
    <property type="evidence" value="ECO:0000250"/>
    <property type="project" value="UniProtKB"/>
</dbReference>
<dbReference type="GO" id="GO:0018393">
    <property type="term" value="P:internal peptidyl-lysine acetylation"/>
    <property type="evidence" value="ECO:0000314"/>
    <property type="project" value="UniProtKB"/>
</dbReference>
<dbReference type="GO" id="GO:0060173">
    <property type="term" value="P:limb development"/>
    <property type="evidence" value="ECO:0000250"/>
    <property type="project" value="UniProtKB"/>
</dbReference>
<dbReference type="GO" id="GO:0007613">
    <property type="term" value="P:memory"/>
    <property type="evidence" value="ECO:0007669"/>
    <property type="project" value="Ensembl"/>
</dbReference>
<dbReference type="GO" id="GO:0018076">
    <property type="term" value="P:N-terminal peptidyl-lysine acetylation"/>
    <property type="evidence" value="ECO:0000314"/>
    <property type="project" value="UniProtKB"/>
</dbReference>
<dbReference type="GO" id="GO:0008285">
    <property type="term" value="P:negative regulation of cell population proliferation"/>
    <property type="evidence" value="ECO:0000314"/>
    <property type="project" value="UniProtKB"/>
</dbReference>
<dbReference type="GO" id="GO:0046600">
    <property type="term" value="P:negative regulation of centriole replication"/>
    <property type="evidence" value="ECO:0000314"/>
    <property type="project" value="UniProtKB"/>
</dbReference>
<dbReference type="GO" id="GO:0110076">
    <property type="term" value="P:negative regulation of ferroptosis"/>
    <property type="evidence" value="ECO:0000315"/>
    <property type="project" value="UniProt"/>
</dbReference>
<dbReference type="GO" id="GO:2000233">
    <property type="term" value="P:negative regulation of rRNA processing"/>
    <property type="evidence" value="ECO:0000314"/>
    <property type="project" value="UniProtKB"/>
</dbReference>
<dbReference type="GO" id="GO:0000122">
    <property type="term" value="P:negative regulation of transcription by RNA polymerase II"/>
    <property type="evidence" value="ECO:0000314"/>
    <property type="project" value="BHF-UCL"/>
</dbReference>
<dbReference type="GO" id="GO:1902425">
    <property type="term" value="P:positive regulation of attachment of mitotic spindle microtubules to kinetochore"/>
    <property type="evidence" value="ECO:0000314"/>
    <property type="project" value="UniProtKB"/>
</dbReference>
<dbReference type="GO" id="GO:0045893">
    <property type="term" value="P:positive regulation of DNA-templated transcription"/>
    <property type="evidence" value="ECO:0000303"/>
    <property type="project" value="ComplexPortal"/>
</dbReference>
<dbReference type="GO" id="GO:0045723">
    <property type="term" value="P:positive regulation of fatty acid biosynthetic process"/>
    <property type="evidence" value="ECO:0000314"/>
    <property type="project" value="UniProt"/>
</dbReference>
<dbReference type="GO" id="GO:0045722">
    <property type="term" value="P:positive regulation of gluconeogenesis"/>
    <property type="evidence" value="ECO:0007669"/>
    <property type="project" value="Ensembl"/>
</dbReference>
<dbReference type="GO" id="GO:0045821">
    <property type="term" value="P:positive regulation of glycolytic process"/>
    <property type="evidence" value="ECO:0007669"/>
    <property type="project" value="Ensembl"/>
</dbReference>
<dbReference type="GO" id="GO:0010976">
    <property type="term" value="P:positive regulation of neuron projection development"/>
    <property type="evidence" value="ECO:0007669"/>
    <property type="project" value="Ensembl"/>
</dbReference>
<dbReference type="GO" id="GO:0045944">
    <property type="term" value="P:positive regulation of transcription by RNA polymerase II"/>
    <property type="evidence" value="ECO:0000314"/>
    <property type="project" value="BHF-UCL"/>
</dbReference>
<dbReference type="GO" id="GO:0000432">
    <property type="term" value="P:positive regulation of transcription from RNA polymerase II promoter by glucose"/>
    <property type="evidence" value="ECO:0007669"/>
    <property type="project" value="Ensembl"/>
</dbReference>
<dbReference type="GO" id="GO:0006473">
    <property type="term" value="P:protein acetylation"/>
    <property type="evidence" value="ECO:0000314"/>
    <property type="project" value="UniProtKB"/>
</dbReference>
<dbReference type="GO" id="GO:0051726">
    <property type="term" value="P:regulation of cell cycle"/>
    <property type="evidence" value="ECO:0000250"/>
    <property type="project" value="ComplexPortal"/>
</dbReference>
<dbReference type="GO" id="GO:0051302">
    <property type="term" value="P:regulation of cell division"/>
    <property type="evidence" value="ECO:0000250"/>
    <property type="project" value="ComplexPortal"/>
</dbReference>
<dbReference type="GO" id="GO:0006282">
    <property type="term" value="P:regulation of DNA repair"/>
    <property type="evidence" value="ECO:0000303"/>
    <property type="project" value="ComplexPortal"/>
</dbReference>
<dbReference type="GO" id="GO:0006355">
    <property type="term" value="P:regulation of DNA-templated transcription"/>
    <property type="evidence" value="ECO:0000250"/>
    <property type="project" value="ComplexPortal"/>
</dbReference>
<dbReference type="GO" id="GO:0045995">
    <property type="term" value="P:regulation of embryonic development"/>
    <property type="evidence" value="ECO:0000250"/>
    <property type="project" value="ComplexPortal"/>
</dbReference>
<dbReference type="GO" id="GO:0043484">
    <property type="term" value="P:regulation of RNA splicing"/>
    <property type="evidence" value="ECO:0000303"/>
    <property type="project" value="ComplexPortal"/>
</dbReference>
<dbReference type="GO" id="GO:0006357">
    <property type="term" value="P:regulation of transcription by RNA polymerase II"/>
    <property type="evidence" value="ECO:0000250"/>
    <property type="project" value="ComplexPortal"/>
</dbReference>
<dbReference type="GO" id="GO:0048511">
    <property type="term" value="P:rhythmic process"/>
    <property type="evidence" value="ECO:0007669"/>
    <property type="project" value="UniProtKB-KW"/>
</dbReference>
<dbReference type="GO" id="GO:0045815">
    <property type="term" value="P:transcription initiation-coupled chromatin remodeling"/>
    <property type="evidence" value="ECO:0000304"/>
    <property type="project" value="Reactome"/>
</dbReference>
<dbReference type="GO" id="GO:0042311">
    <property type="term" value="P:vasodilation"/>
    <property type="evidence" value="ECO:0007669"/>
    <property type="project" value="Ensembl"/>
</dbReference>
<dbReference type="CDD" id="cd05509">
    <property type="entry name" value="Bromo_gcn5_like"/>
    <property type="match status" value="1"/>
</dbReference>
<dbReference type="CDD" id="cd04301">
    <property type="entry name" value="NAT_SF"/>
    <property type="match status" value="1"/>
</dbReference>
<dbReference type="FunFam" id="3.40.630.30:FF:000004">
    <property type="entry name" value="Histone acetyltransferase KAT2A"/>
    <property type="match status" value="1"/>
</dbReference>
<dbReference type="FunFam" id="1.20.920.10:FF:000014">
    <property type="entry name" value="Histone acetyltransferase KAT2B"/>
    <property type="match status" value="1"/>
</dbReference>
<dbReference type="Gene3D" id="3.40.630.30">
    <property type="match status" value="1"/>
</dbReference>
<dbReference type="Gene3D" id="1.20.920.10">
    <property type="entry name" value="Bromodomain-like"/>
    <property type="match status" value="1"/>
</dbReference>
<dbReference type="IDEAL" id="IID00390"/>
<dbReference type="InterPro" id="IPR016181">
    <property type="entry name" value="Acyl_CoA_acyltransferase"/>
</dbReference>
<dbReference type="InterPro" id="IPR001487">
    <property type="entry name" value="Bromodomain"/>
</dbReference>
<dbReference type="InterPro" id="IPR036427">
    <property type="entry name" value="Bromodomain-like_sf"/>
</dbReference>
<dbReference type="InterPro" id="IPR018359">
    <property type="entry name" value="Bromodomain_CS"/>
</dbReference>
<dbReference type="InterPro" id="IPR037800">
    <property type="entry name" value="GCN5"/>
</dbReference>
<dbReference type="InterPro" id="IPR016376">
    <property type="entry name" value="GCN5/PCAF"/>
</dbReference>
<dbReference type="InterPro" id="IPR000182">
    <property type="entry name" value="GNAT_dom"/>
</dbReference>
<dbReference type="InterPro" id="IPR009464">
    <property type="entry name" value="PCAF_N"/>
</dbReference>
<dbReference type="PANTHER" id="PTHR45750">
    <property type="entry name" value="GH11602P"/>
    <property type="match status" value="1"/>
</dbReference>
<dbReference type="PANTHER" id="PTHR45750:SF2">
    <property type="entry name" value="HISTONE ACETYLTRANSFERASE KAT2B"/>
    <property type="match status" value="1"/>
</dbReference>
<dbReference type="Pfam" id="PF00583">
    <property type="entry name" value="Acetyltransf_1"/>
    <property type="match status" value="1"/>
</dbReference>
<dbReference type="Pfam" id="PF00439">
    <property type="entry name" value="Bromodomain"/>
    <property type="match status" value="1"/>
</dbReference>
<dbReference type="Pfam" id="PF06466">
    <property type="entry name" value="PCAF_N"/>
    <property type="match status" value="1"/>
</dbReference>
<dbReference type="PIRSF" id="PIRSF003048">
    <property type="entry name" value="Histone_acetylase_PCAF"/>
    <property type="match status" value="1"/>
</dbReference>
<dbReference type="PRINTS" id="PR00503">
    <property type="entry name" value="BROMODOMAIN"/>
</dbReference>
<dbReference type="SMART" id="SM00297">
    <property type="entry name" value="BROMO"/>
    <property type="match status" value="1"/>
</dbReference>
<dbReference type="SUPFAM" id="SSF55729">
    <property type="entry name" value="Acyl-CoA N-acyltransferases (Nat)"/>
    <property type="match status" value="1"/>
</dbReference>
<dbReference type="SUPFAM" id="SSF47370">
    <property type="entry name" value="Bromodomain"/>
    <property type="match status" value="1"/>
</dbReference>
<dbReference type="PROSITE" id="PS00633">
    <property type="entry name" value="BROMODOMAIN_1"/>
    <property type="match status" value="1"/>
</dbReference>
<dbReference type="PROSITE" id="PS50014">
    <property type="entry name" value="BROMODOMAIN_2"/>
    <property type="match status" value="1"/>
</dbReference>
<dbReference type="PROSITE" id="PS51186">
    <property type="entry name" value="GNAT"/>
    <property type="match status" value="1"/>
</dbReference>